<name>RL24_MANSM</name>
<comment type="function">
    <text evidence="1">One of two assembly initiator proteins, it binds directly to the 5'-end of the 23S rRNA, where it nucleates assembly of the 50S subunit.</text>
</comment>
<comment type="function">
    <text evidence="1">One of the proteins that surrounds the polypeptide exit tunnel on the outside of the subunit.</text>
</comment>
<comment type="subunit">
    <text evidence="1">Part of the 50S ribosomal subunit.</text>
</comment>
<comment type="similarity">
    <text evidence="1">Belongs to the universal ribosomal protein uL24 family.</text>
</comment>
<feature type="chain" id="PRO_0000241617" description="Large ribosomal subunit protein uL24">
    <location>
        <begin position="1"/>
        <end position="103"/>
    </location>
</feature>
<keyword id="KW-0687">Ribonucleoprotein</keyword>
<keyword id="KW-0689">Ribosomal protein</keyword>
<keyword id="KW-0694">RNA-binding</keyword>
<keyword id="KW-0699">rRNA-binding</keyword>
<protein>
    <recommendedName>
        <fullName evidence="1">Large ribosomal subunit protein uL24</fullName>
    </recommendedName>
    <alternativeName>
        <fullName evidence="2">50S ribosomal protein L24</fullName>
    </alternativeName>
</protein>
<evidence type="ECO:0000255" key="1">
    <source>
        <dbReference type="HAMAP-Rule" id="MF_01326"/>
    </source>
</evidence>
<evidence type="ECO:0000305" key="2"/>
<gene>
    <name evidence="1" type="primary">rplX</name>
    <name type="ordered locus">MS2037</name>
</gene>
<dbReference type="EMBL" id="AE016827">
    <property type="protein sequence ID" value="AAU38644.1"/>
    <property type="molecule type" value="Genomic_DNA"/>
</dbReference>
<dbReference type="RefSeq" id="WP_011201195.1">
    <property type="nucleotide sequence ID" value="NC_006300.1"/>
</dbReference>
<dbReference type="SMR" id="Q65QW6"/>
<dbReference type="STRING" id="221988.MS2037"/>
<dbReference type="KEGG" id="msu:MS2037"/>
<dbReference type="eggNOG" id="COG0198">
    <property type="taxonomic scope" value="Bacteria"/>
</dbReference>
<dbReference type="HOGENOM" id="CLU_093315_2_2_6"/>
<dbReference type="OrthoDB" id="9807419at2"/>
<dbReference type="Proteomes" id="UP000000607">
    <property type="component" value="Chromosome"/>
</dbReference>
<dbReference type="GO" id="GO:1990904">
    <property type="term" value="C:ribonucleoprotein complex"/>
    <property type="evidence" value="ECO:0007669"/>
    <property type="project" value="UniProtKB-KW"/>
</dbReference>
<dbReference type="GO" id="GO:0005840">
    <property type="term" value="C:ribosome"/>
    <property type="evidence" value="ECO:0007669"/>
    <property type="project" value="UniProtKB-KW"/>
</dbReference>
<dbReference type="GO" id="GO:0019843">
    <property type="term" value="F:rRNA binding"/>
    <property type="evidence" value="ECO:0007669"/>
    <property type="project" value="UniProtKB-UniRule"/>
</dbReference>
<dbReference type="GO" id="GO:0003735">
    <property type="term" value="F:structural constituent of ribosome"/>
    <property type="evidence" value="ECO:0007669"/>
    <property type="project" value="InterPro"/>
</dbReference>
<dbReference type="GO" id="GO:0006412">
    <property type="term" value="P:translation"/>
    <property type="evidence" value="ECO:0007669"/>
    <property type="project" value="UniProtKB-UniRule"/>
</dbReference>
<dbReference type="CDD" id="cd06089">
    <property type="entry name" value="KOW_RPL26"/>
    <property type="match status" value="1"/>
</dbReference>
<dbReference type="FunFam" id="2.30.30.30:FF:000004">
    <property type="entry name" value="50S ribosomal protein L24"/>
    <property type="match status" value="1"/>
</dbReference>
<dbReference type="Gene3D" id="2.30.30.30">
    <property type="match status" value="1"/>
</dbReference>
<dbReference type="HAMAP" id="MF_01326_B">
    <property type="entry name" value="Ribosomal_uL24_B"/>
    <property type="match status" value="1"/>
</dbReference>
<dbReference type="InterPro" id="IPR005824">
    <property type="entry name" value="KOW"/>
</dbReference>
<dbReference type="InterPro" id="IPR014722">
    <property type="entry name" value="Rib_uL2_dom2"/>
</dbReference>
<dbReference type="InterPro" id="IPR003256">
    <property type="entry name" value="Ribosomal_uL24"/>
</dbReference>
<dbReference type="InterPro" id="IPR005825">
    <property type="entry name" value="Ribosomal_uL24_CS"/>
</dbReference>
<dbReference type="InterPro" id="IPR041988">
    <property type="entry name" value="Ribosomal_uL24_KOW"/>
</dbReference>
<dbReference type="InterPro" id="IPR008991">
    <property type="entry name" value="Translation_prot_SH3-like_sf"/>
</dbReference>
<dbReference type="NCBIfam" id="TIGR01079">
    <property type="entry name" value="rplX_bact"/>
    <property type="match status" value="1"/>
</dbReference>
<dbReference type="PANTHER" id="PTHR12903">
    <property type="entry name" value="MITOCHONDRIAL RIBOSOMAL PROTEIN L24"/>
    <property type="match status" value="1"/>
</dbReference>
<dbReference type="Pfam" id="PF00467">
    <property type="entry name" value="KOW"/>
    <property type="match status" value="1"/>
</dbReference>
<dbReference type="Pfam" id="PF17136">
    <property type="entry name" value="ribosomal_L24"/>
    <property type="match status" value="1"/>
</dbReference>
<dbReference type="SMART" id="SM00739">
    <property type="entry name" value="KOW"/>
    <property type="match status" value="1"/>
</dbReference>
<dbReference type="SUPFAM" id="SSF50104">
    <property type="entry name" value="Translation proteins SH3-like domain"/>
    <property type="match status" value="1"/>
</dbReference>
<dbReference type="PROSITE" id="PS01108">
    <property type="entry name" value="RIBOSOMAL_L24"/>
    <property type="match status" value="1"/>
</dbReference>
<sequence>MAAKIRQNDEVIVLTGKDKGKRGKVTQVLPNGKVIVEGVKIITKHEKPVPALGKEGGLVKKEAAIDVSNVAIFNPKTNKADRVGFRFEDGKKVRFFKSNNEII</sequence>
<reference key="1">
    <citation type="journal article" date="2004" name="Nat. Biotechnol.">
        <title>The genome sequence of the capnophilic rumen bacterium Mannheimia succiniciproducens.</title>
        <authorList>
            <person name="Hong S.H."/>
            <person name="Kim J.S."/>
            <person name="Lee S.Y."/>
            <person name="In Y.H."/>
            <person name="Choi S.S."/>
            <person name="Rih J.-K."/>
            <person name="Kim C.H."/>
            <person name="Jeong H."/>
            <person name="Hur C.G."/>
            <person name="Kim J.J."/>
        </authorList>
    </citation>
    <scope>NUCLEOTIDE SEQUENCE [LARGE SCALE GENOMIC DNA]</scope>
    <source>
        <strain>KCTC 0769BP / MBEL55E</strain>
    </source>
</reference>
<organism>
    <name type="scientific">Mannheimia succiniciproducens (strain KCTC 0769BP / MBEL55E)</name>
    <dbReference type="NCBI Taxonomy" id="221988"/>
    <lineage>
        <taxon>Bacteria</taxon>
        <taxon>Pseudomonadati</taxon>
        <taxon>Pseudomonadota</taxon>
        <taxon>Gammaproteobacteria</taxon>
        <taxon>Pasteurellales</taxon>
        <taxon>Pasteurellaceae</taxon>
        <taxon>Basfia</taxon>
    </lineage>
</organism>
<proteinExistence type="inferred from homology"/>
<accession>Q65QW6</accession>